<feature type="chain" id="PRO_1000129311" description="Ribonuclease PH">
    <location>
        <begin position="1"/>
        <end position="238"/>
    </location>
</feature>
<feature type="binding site" evidence="1">
    <location>
        <position position="86"/>
    </location>
    <ligand>
        <name>phosphate</name>
        <dbReference type="ChEBI" id="CHEBI:43474"/>
        <note>substrate</note>
    </ligand>
</feature>
<feature type="binding site" evidence="1">
    <location>
        <begin position="124"/>
        <end position="126"/>
    </location>
    <ligand>
        <name>phosphate</name>
        <dbReference type="ChEBI" id="CHEBI:43474"/>
        <note>substrate</note>
    </ligand>
</feature>
<organism>
    <name type="scientific">Acinetobacter baumannii (strain AYE)</name>
    <dbReference type="NCBI Taxonomy" id="509173"/>
    <lineage>
        <taxon>Bacteria</taxon>
        <taxon>Pseudomonadati</taxon>
        <taxon>Pseudomonadota</taxon>
        <taxon>Gammaproteobacteria</taxon>
        <taxon>Moraxellales</taxon>
        <taxon>Moraxellaceae</taxon>
        <taxon>Acinetobacter</taxon>
        <taxon>Acinetobacter calcoaceticus/baumannii complex</taxon>
    </lineage>
</organism>
<dbReference type="EC" id="2.7.7.56" evidence="1"/>
<dbReference type="EMBL" id="CU459141">
    <property type="protein sequence ID" value="CAM88586.1"/>
    <property type="molecule type" value="Genomic_DNA"/>
</dbReference>
<dbReference type="RefSeq" id="WP_001217232.1">
    <property type="nucleotide sequence ID" value="NZ_JBDGFB010000006.1"/>
</dbReference>
<dbReference type="SMR" id="B0V5W8"/>
<dbReference type="EnsemblBacteria" id="CAM88586">
    <property type="protein sequence ID" value="CAM88586"/>
    <property type="gene ID" value="ABAYE3828"/>
</dbReference>
<dbReference type="GeneID" id="92892004"/>
<dbReference type="KEGG" id="aby:ABAYE3828"/>
<dbReference type="HOGENOM" id="CLU_050858_0_0_6"/>
<dbReference type="GO" id="GO:0000175">
    <property type="term" value="F:3'-5'-RNA exonuclease activity"/>
    <property type="evidence" value="ECO:0007669"/>
    <property type="project" value="UniProtKB-UniRule"/>
</dbReference>
<dbReference type="GO" id="GO:0000049">
    <property type="term" value="F:tRNA binding"/>
    <property type="evidence" value="ECO:0007669"/>
    <property type="project" value="UniProtKB-UniRule"/>
</dbReference>
<dbReference type="GO" id="GO:0009022">
    <property type="term" value="F:tRNA nucleotidyltransferase activity"/>
    <property type="evidence" value="ECO:0007669"/>
    <property type="project" value="UniProtKB-UniRule"/>
</dbReference>
<dbReference type="GO" id="GO:0016075">
    <property type="term" value="P:rRNA catabolic process"/>
    <property type="evidence" value="ECO:0007669"/>
    <property type="project" value="UniProtKB-UniRule"/>
</dbReference>
<dbReference type="GO" id="GO:0006364">
    <property type="term" value="P:rRNA processing"/>
    <property type="evidence" value="ECO:0007669"/>
    <property type="project" value="UniProtKB-KW"/>
</dbReference>
<dbReference type="GO" id="GO:0008033">
    <property type="term" value="P:tRNA processing"/>
    <property type="evidence" value="ECO:0007669"/>
    <property type="project" value="UniProtKB-UniRule"/>
</dbReference>
<dbReference type="CDD" id="cd11362">
    <property type="entry name" value="RNase_PH_bact"/>
    <property type="match status" value="1"/>
</dbReference>
<dbReference type="FunFam" id="3.30.230.70:FF:000003">
    <property type="entry name" value="Ribonuclease PH"/>
    <property type="match status" value="1"/>
</dbReference>
<dbReference type="Gene3D" id="3.30.230.70">
    <property type="entry name" value="GHMP Kinase, N-terminal domain"/>
    <property type="match status" value="1"/>
</dbReference>
<dbReference type="HAMAP" id="MF_00564">
    <property type="entry name" value="RNase_PH"/>
    <property type="match status" value="1"/>
</dbReference>
<dbReference type="InterPro" id="IPR001247">
    <property type="entry name" value="ExoRNase_PH_dom1"/>
</dbReference>
<dbReference type="InterPro" id="IPR015847">
    <property type="entry name" value="ExoRNase_PH_dom2"/>
</dbReference>
<dbReference type="InterPro" id="IPR036345">
    <property type="entry name" value="ExoRNase_PH_dom2_sf"/>
</dbReference>
<dbReference type="InterPro" id="IPR027408">
    <property type="entry name" value="PNPase/RNase_PH_dom_sf"/>
</dbReference>
<dbReference type="InterPro" id="IPR020568">
    <property type="entry name" value="Ribosomal_Su5_D2-typ_SF"/>
</dbReference>
<dbReference type="InterPro" id="IPR050080">
    <property type="entry name" value="RNase_PH"/>
</dbReference>
<dbReference type="InterPro" id="IPR002381">
    <property type="entry name" value="RNase_PH_bac-type"/>
</dbReference>
<dbReference type="InterPro" id="IPR018336">
    <property type="entry name" value="RNase_PH_CS"/>
</dbReference>
<dbReference type="NCBIfam" id="TIGR01966">
    <property type="entry name" value="RNasePH"/>
    <property type="match status" value="1"/>
</dbReference>
<dbReference type="PANTHER" id="PTHR11953">
    <property type="entry name" value="EXOSOME COMPLEX COMPONENT"/>
    <property type="match status" value="1"/>
</dbReference>
<dbReference type="PANTHER" id="PTHR11953:SF0">
    <property type="entry name" value="EXOSOME COMPLEX COMPONENT RRP41"/>
    <property type="match status" value="1"/>
</dbReference>
<dbReference type="Pfam" id="PF01138">
    <property type="entry name" value="RNase_PH"/>
    <property type="match status" value="1"/>
</dbReference>
<dbReference type="Pfam" id="PF03725">
    <property type="entry name" value="RNase_PH_C"/>
    <property type="match status" value="1"/>
</dbReference>
<dbReference type="SUPFAM" id="SSF55666">
    <property type="entry name" value="Ribonuclease PH domain 2-like"/>
    <property type="match status" value="1"/>
</dbReference>
<dbReference type="SUPFAM" id="SSF54211">
    <property type="entry name" value="Ribosomal protein S5 domain 2-like"/>
    <property type="match status" value="1"/>
</dbReference>
<dbReference type="PROSITE" id="PS01277">
    <property type="entry name" value="RIBONUCLEASE_PH"/>
    <property type="match status" value="1"/>
</dbReference>
<protein>
    <recommendedName>
        <fullName evidence="1">Ribonuclease PH</fullName>
        <shortName evidence="1">RNase PH</shortName>
        <ecNumber evidence="1">2.7.7.56</ecNumber>
    </recommendedName>
    <alternativeName>
        <fullName evidence="1">tRNA nucleotidyltransferase</fullName>
    </alternativeName>
</protein>
<keyword id="KW-0548">Nucleotidyltransferase</keyword>
<keyword id="KW-0694">RNA-binding</keyword>
<keyword id="KW-0698">rRNA processing</keyword>
<keyword id="KW-0808">Transferase</keyword>
<keyword id="KW-0819">tRNA processing</keyword>
<keyword id="KW-0820">tRNA-binding</keyword>
<comment type="function">
    <text evidence="1">Phosphorolytic 3'-5' exoribonuclease that plays an important role in tRNA 3'-end maturation. Removes nucleotide residues following the 3'-CCA terminus of tRNAs; can also add nucleotides to the ends of RNA molecules by using nucleoside diphosphates as substrates, but this may not be physiologically important. Probably plays a role in initiation of 16S rRNA degradation (leading to ribosome degradation) during starvation.</text>
</comment>
<comment type="catalytic activity">
    <reaction evidence="1">
        <text>tRNA(n+1) + phosphate = tRNA(n) + a ribonucleoside 5'-diphosphate</text>
        <dbReference type="Rhea" id="RHEA:10628"/>
        <dbReference type="Rhea" id="RHEA-COMP:17343"/>
        <dbReference type="Rhea" id="RHEA-COMP:17344"/>
        <dbReference type="ChEBI" id="CHEBI:43474"/>
        <dbReference type="ChEBI" id="CHEBI:57930"/>
        <dbReference type="ChEBI" id="CHEBI:173114"/>
        <dbReference type="EC" id="2.7.7.56"/>
    </reaction>
</comment>
<comment type="subunit">
    <text evidence="1">Homohexameric ring arranged as a trimer of dimers.</text>
</comment>
<comment type="similarity">
    <text evidence="1">Belongs to the RNase PH family.</text>
</comment>
<reference key="1">
    <citation type="journal article" date="2008" name="PLoS ONE">
        <title>Comparative analysis of Acinetobacters: three genomes for three lifestyles.</title>
        <authorList>
            <person name="Vallenet D."/>
            <person name="Nordmann P."/>
            <person name="Barbe V."/>
            <person name="Poirel L."/>
            <person name="Mangenot S."/>
            <person name="Bataille E."/>
            <person name="Dossat C."/>
            <person name="Gas S."/>
            <person name="Kreimeyer A."/>
            <person name="Lenoble P."/>
            <person name="Oztas S."/>
            <person name="Poulain J."/>
            <person name="Segurens B."/>
            <person name="Robert C."/>
            <person name="Abergel C."/>
            <person name="Claverie J.-M."/>
            <person name="Raoult D."/>
            <person name="Medigue C."/>
            <person name="Weissenbach J."/>
            <person name="Cruveiller S."/>
        </authorList>
    </citation>
    <scope>NUCLEOTIDE SEQUENCE [LARGE SCALE GENOMIC DNA]</scope>
    <source>
        <strain>AYE</strain>
    </source>
</reference>
<proteinExistence type="inferred from homology"/>
<accession>B0V5W8</accession>
<gene>
    <name evidence="1" type="primary">rph</name>
    <name type="ordered locus">ABAYE3828</name>
</gene>
<evidence type="ECO:0000255" key="1">
    <source>
        <dbReference type="HAMAP-Rule" id="MF_00564"/>
    </source>
</evidence>
<sequence length="238" mass="26296">MRIDQRALDQLREVKITRNYTRYAEGSVLVEFGHTKVLCTASIDNSVPRFLKGQGQGWVTAEYGMLPRSTHSRCDREAARGKQTGRTQEIQRLIGRSLRAMVDLKKLGENTITIDCDVIQADGGTRTASITGAAVALVDAMNVLLAQKKIKQDPLKGLVAAISVGMYQDEVLLDLCYEEDSNCQTDLNVVMTQAGEFIEIQGTAEDKPFTRAQSNAMLEMAEKGIAELIKKQQEALGW</sequence>
<name>RNPH_ACIBY</name>